<feature type="chain" id="PRO_0000091163" description="Elongation factor G">
    <location>
        <begin position="1"/>
        <end position="688"/>
    </location>
</feature>
<feature type="domain" description="tr-type G">
    <location>
        <begin position="8"/>
        <end position="282"/>
    </location>
</feature>
<feature type="binding site" evidence="1">
    <location>
        <begin position="17"/>
        <end position="24"/>
    </location>
    <ligand>
        <name>GTP</name>
        <dbReference type="ChEBI" id="CHEBI:37565"/>
    </ligand>
</feature>
<feature type="binding site" evidence="1">
    <location>
        <begin position="81"/>
        <end position="85"/>
    </location>
    <ligand>
        <name>GTP</name>
        <dbReference type="ChEBI" id="CHEBI:37565"/>
    </ligand>
</feature>
<feature type="binding site" evidence="1">
    <location>
        <begin position="135"/>
        <end position="138"/>
    </location>
    <ligand>
        <name>GTP</name>
        <dbReference type="ChEBI" id="CHEBI:37565"/>
    </ligand>
</feature>
<keyword id="KW-0002">3D-structure</keyword>
<keyword id="KW-0963">Cytoplasm</keyword>
<keyword id="KW-0251">Elongation factor</keyword>
<keyword id="KW-0342">GTP-binding</keyword>
<keyword id="KW-0547">Nucleotide-binding</keyword>
<keyword id="KW-0648">Protein biosynthesis</keyword>
<keyword id="KW-1185">Reference proteome</keyword>
<name>EFG_MYCPN</name>
<comment type="function">
    <text evidence="1">Catalyzes the GTP-dependent ribosomal translocation step during translation elongation. During this step, the ribosome changes from the pre-translocational (PRE) to the post-translocational (POST) state as the newly formed A-site-bound peptidyl-tRNA and P-site-bound deacylated tRNA move to the P and E sites, respectively. Catalyzes the coordinated movement of the two tRNA molecules, the mRNA and conformational changes in the ribosome (By similarity).</text>
</comment>
<comment type="subcellular location">
    <subcellularLocation>
        <location evidence="1">Cytoplasm</location>
    </subcellularLocation>
</comment>
<comment type="similarity">
    <text evidence="2">Belongs to the TRAFAC class translation factor GTPase superfamily. Classic translation factor GTPase family. EF-G/EF-2 subfamily.</text>
</comment>
<proteinExistence type="evidence at protein level"/>
<sequence length="688" mass="76500">MARTVDLINFRNFGIMAHIDAGKTTTSERILFHSGRIHKIGETHDGESVMDWMEQEKERGITITSAATSVSWKNCSLNLIDTPGHVDFTVEVERSLRVLDGAIAVLDAQMGVEPQTETVWRQASRYEVPRIIFVNKMDKTGANFERSVQSIQQRLGVKAVPIQLPIGAENDFNGIIDLIEEKVYFFDGGKEEKAEEKPIPDQFKDQVKQMRAHLVEEVANFDDQLMADYLEGKEISIADIKRCIRKGVIGCQFFPVLCGSAFKNKGIKLLLDAVVDFLPSPVDVPQAKAYGEDGNEVLISASDDAPFVGLAFKVATDPFVGRLTFVRVYSGVLKSGSYVKNVRKNKKERVSRLVKMHAQNRNEIEEIRAGDICAIIGLKDTTTGETLVDDKIDVQLEAMQFAQPVISLAVEPKTKADQEKMSIALSKLAEEDPTFKTFTDPETGQTIIAGMGELHLDILVDRMRREFKVEVNVGAPQVSFRETFNKESEVEGKYIKQSGGRGQYGHVKIRFEPNKDKGFEFVDKIVGGRIPREYIKPVQAGLENAMASGPLAGYPMIDIKATLFDGSFHEVDSSEMAFKIAASLALKEAGKVCSPVLLEPIMAIEVTVPEQYFGDTMGDISSRRGLIEGTEQRDNVQVIKAKVPLKEMFGYATDLRSFSQGRGNYVMQFSHYAETPKSVVNEIIATKK</sequence>
<organism>
    <name type="scientific">Mycoplasma pneumoniae (strain ATCC 29342 / M129 / Subtype 1)</name>
    <name type="common">Mycoplasmoides pneumoniae</name>
    <dbReference type="NCBI Taxonomy" id="272634"/>
    <lineage>
        <taxon>Bacteria</taxon>
        <taxon>Bacillati</taxon>
        <taxon>Mycoplasmatota</taxon>
        <taxon>Mycoplasmoidales</taxon>
        <taxon>Mycoplasmoidaceae</taxon>
        <taxon>Mycoplasmoides</taxon>
    </lineage>
</organism>
<reference key="1">
    <citation type="journal article" date="1996" name="Nucleic Acids Res.">
        <title>Complete sequence analysis of the genome of the bacterium Mycoplasma pneumoniae.</title>
        <authorList>
            <person name="Himmelreich R."/>
            <person name="Hilbert H."/>
            <person name="Plagens H."/>
            <person name="Pirkl E."/>
            <person name="Li B.-C."/>
            <person name="Herrmann R."/>
        </authorList>
    </citation>
    <scope>NUCLEOTIDE SEQUENCE [LARGE SCALE GENOMIC DNA]</scope>
    <source>
        <strain>ATCC 29342 / M129 / Subtype 1</strain>
    </source>
</reference>
<evidence type="ECO:0000250" key="1"/>
<evidence type="ECO:0000305" key="2"/>
<accession>P75544</accession>
<dbReference type="EMBL" id="U00089">
    <property type="protein sequence ID" value="AAB96252.1"/>
    <property type="molecule type" value="Genomic_DNA"/>
</dbReference>
<dbReference type="PIR" id="S73930">
    <property type="entry name" value="S73930"/>
</dbReference>
<dbReference type="RefSeq" id="NP_109915.1">
    <property type="nucleotide sequence ID" value="NC_000912.1"/>
</dbReference>
<dbReference type="RefSeq" id="WP_010874584.1">
    <property type="nucleotide sequence ID" value="NZ_OU342337.1"/>
</dbReference>
<dbReference type="PDB" id="7PAO">
    <property type="method" value="EM"/>
    <property type="resolution" value="7.00 A"/>
    <property type="chains" value="9=1-688"/>
</dbReference>
<dbReference type="PDB" id="7PAQ">
    <property type="method" value="EM"/>
    <property type="resolution" value="8.90 A"/>
    <property type="chains" value="9=1-688"/>
</dbReference>
<dbReference type="PDB" id="7PAR">
    <property type="method" value="EM"/>
    <property type="resolution" value="8.20 A"/>
    <property type="chains" value="9=1-688"/>
</dbReference>
<dbReference type="PDB" id="7PIB">
    <property type="method" value="EM"/>
    <property type="resolution" value="4.70 A"/>
    <property type="chains" value="9=1-688"/>
</dbReference>
<dbReference type="PDB" id="7PIS">
    <property type="method" value="EM"/>
    <property type="resolution" value="15.00 A"/>
    <property type="chains" value="9=1-688"/>
</dbReference>
<dbReference type="PDB" id="7PIT">
    <property type="method" value="EM"/>
    <property type="resolution" value="5.70 A"/>
    <property type="chains" value="9=1-688"/>
</dbReference>
<dbReference type="PDBsum" id="7PAO"/>
<dbReference type="PDBsum" id="7PAQ"/>
<dbReference type="PDBsum" id="7PAR"/>
<dbReference type="PDBsum" id="7PIB"/>
<dbReference type="PDBsum" id="7PIS"/>
<dbReference type="PDBsum" id="7PIT"/>
<dbReference type="EMDB" id="EMD-13279"/>
<dbReference type="EMDB" id="EMD-13280"/>
<dbReference type="EMDB" id="EMD-13281"/>
<dbReference type="EMDB" id="EMD-13435"/>
<dbReference type="EMDB" id="EMD-13449"/>
<dbReference type="EMDB" id="EMD-13450"/>
<dbReference type="SMR" id="P75544"/>
<dbReference type="STRING" id="272634.MPN_227"/>
<dbReference type="EnsemblBacteria" id="AAB96252">
    <property type="protein sequence ID" value="AAB96252"/>
    <property type="gene ID" value="MPN_227"/>
</dbReference>
<dbReference type="GeneID" id="66609127"/>
<dbReference type="KEGG" id="mpn:MPN_227"/>
<dbReference type="PATRIC" id="fig|272634.6.peg.246"/>
<dbReference type="HOGENOM" id="CLU_002794_4_1_14"/>
<dbReference type="OrthoDB" id="9804431at2"/>
<dbReference type="BioCyc" id="MPNE272634:G1GJ3-364-MONOMER"/>
<dbReference type="Proteomes" id="UP000000808">
    <property type="component" value="Chromosome"/>
</dbReference>
<dbReference type="GO" id="GO:0005737">
    <property type="term" value="C:cytoplasm"/>
    <property type="evidence" value="ECO:0007669"/>
    <property type="project" value="UniProtKB-SubCell"/>
</dbReference>
<dbReference type="GO" id="GO:0005525">
    <property type="term" value="F:GTP binding"/>
    <property type="evidence" value="ECO:0007669"/>
    <property type="project" value="UniProtKB-UniRule"/>
</dbReference>
<dbReference type="GO" id="GO:0003924">
    <property type="term" value="F:GTPase activity"/>
    <property type="evidence" value="ECO:0007669"/>
    <property type="project" value="InterPro"/>
</dbReference>
<dbReference type="GO" id="GO:0003746">
    <property type="term" value="F:translation elongation factor activity"/>
    <property type="evidence" value="ECO:0007669"/>
    <property type="project" value="UniProtKB-UniRule"/>
</dbReference>
<dbReference type="GO" id="GO:0032790">
    <property type="term" value="P:ribosome disassembly"/>
    <property type="evidence" value="ECO:0007669"/>
    <property type="project" value="TreeGrafter"/>
</dbReference>
<dbReference type="CDD" id="cd01886">
    <property type="entry name" value="EF-G"/>
    <property type="match status" value="1"/>
</dbReference>
<dbReference type="CDD" id="cd16262">
    <property type="entry name" value="EFG_III"/>
    <property type="match status" value="1"/>
</dbReference>
<dbReference type="CDD" id="cd01434">
    <property type="entry name" value="EFG_mtEFG1_IV"/>
    <property type="match status" value="1"/>
</dbReference>
<dbReference type="CDD" id="cd03713">
    <property type="entry name" value="EFG_mtEFG_C"/>
    <property type="match status" value="1"/>
</dbReference>
<dbReference type="CDD" id="cd04088">
    <property type="entry name" value="EFG_mtEFG_II"/>
    <property type="match status" value="1"/>
</dbReference>
<dbReference type="FunFam" id="2.40.30.10:FF:000006">
    <property type="entry name" value="Elongation factor G"/>
    <property type="match status" value="1"/>
</dbReference>
<dbReference type="FunFam" id="3.30.230.10:FF:000003">
    <property type="entry name" value="Elongation factor G"/>
    <property type="match status" value="1"/>
</dbReference>
<dbReference type="FunFam" id="3.30.70.240:FF:000001">
    <property type="entry name" value="Elongation factor G"/>
    <property type="match status" value="1"/>
</dbReference>
<dbReference type="FunFam" id="3.30.70.870:FF:000001">
    <property type="entry name" value="Elongation factor G"/>
    <property type="match status" value="1"/>
</dbReference>
<dbReference type="FunFam" id="3.40.50.300:FF:000029">
    <property type="entry name" value="Elongation factor G"/>
    <property type="match status" value="1"/>
</dbReference>
<dbReference type="Gene3D" id="3.30.230.10">
    <property type="match status" value="1"/>
</dbReference>
<dbReference type="Gene3D" id="3.30.70.240">
    <property type="match status" value="1"/>
</dbReference>
<dbReference type="Gene3D" id="3.30.70.870">
    <property type="entry name" value="Elongation Factor G (Translational Gtpase), domain 3"/>
    <property type="match status" value="1"/>
</dbReference>
<dbReference type="Gene3D" id="3.40.50.300">
    <property type="entry name" value="P-loop containing nucleotide triphosphate hydrolases"/>
    <property type="match status" value="1"/>
</dbReference>
<dbReference type="Gene3D" id="2.40.30.10">
    <property type="entry name" value="Translation factors"/>
    <property type="match status" value="1"/>
</dbReference>
<dbReference type="HAMAP" id="MF_00054_B">
    <property type="entry name" value="EF_G_EF_2_B"/>
    <property type="match status" value="1"/>
</dbReference>
<dbReference type="InterPro" id="IPR041095">
    <property type="entry name" value="EFG_II"/>
</dbReference>
<dbReference type="InterPro" id="IPR009022">
    <property type="entry name" value="EFG_III"/>
</dbReference>
<dbReference type="InterPro" id="IPR035647">
    <property type="entry name" value="EFG_III/V"/>
</dbReference>
<dbReference type="InterPro" id="IPR047872">
    <property type="entry name" value="EFG_IV"/>
</dbReference>
<dbReference type="InterPro" id="IPR035649">
    <property type="entry name" value="EFG_V"/>
</dbReference>
<dbReference type="InterPro" id="IPR000640">
    <property type="entry name" value="EFG_V-like"/>
</dbReference>
<dbReference type="InterPro" id="IPR004161">
    <property type="entry name" value="EFTu-like_2"/>
</dbReference>
<dbReference type="InterPro" id="IPR031157">
    <property type="entry name" value="G_TR_CS"/>
</dbReference>
<dbReference type="InterPro" id="IPR027417">
    <property type="entry name" value="P-loop_NTPase"/>
</dbReference>
<dbReference type="InterPro" id="IPR020568">
    <property type="entry name" value="Ribosomal_Su5_D2-typ_SF"/>
</dbReference>
<dbReference type="InterPro" id="IPR014721">
    <property type="entry name" value="Ribsml_uS5_D2-typ_fold_subgr"/>
</dbReference>
<dbReference type="InterPro" id="IPR005225">
    <property type="entry name" value="Small_GTP-bd"/>
</dbReference>
<dbReference type="InterPro" id="IPR000795">
    <property type="entry name" value="T_Tr_GTP-bd_dom"/>
</dbReference>
<dbReference type="InterPro" id="IPR009000">
    <property type="entry name" value="Transl_B-barrel_sf"/>
</dbReference>
<dbReference type="InterPro" id="IPR004540">
    <property type="entry name" value="Transl_elong_EFG/EF2"/>
</dbReference>
<dbReference type="InterPro" id="IPR005517">
    <property type="entry name" value="Transl_elong_EFG/EF2_IV"/>
</dbReference>
<dbReference type="NCBIfam" id="TIGR00484">
    <property type="entry name" value="EF-G"/>
    <property type="match status" value="1"/>
</dbReference>
<dbReference type="NCBIfam" id="NF009379">
    <property type="entry name" value="PRK12740.1-3"/>
    <property type="match status" value="1"/>
</dbReference>
<dbReference type="NCBIfam" id="NF009381">
    <property type="entry name" value="PRK12740.1-5"/>
    <property type="match status" value="1"/>
</dbReference>
<dbReference type="NCBIfam" id="TIGR00231">
    <property type="entry name" value="small_GTP"/>
    <property type="match status" value="1"/>
</dbReference>
<dbReference type="PANTHER" id="PTHR43261:SF1">
    <property type="entry name" value="RIBOSOME-RELEASING FACTOR 2, MITOCHONDRIAL"/>
    <property type="match status" value="1"/>
</dbReference>
<dbReference type="PANTHER" id="PTHR43261">
    <property type="entry name" value="TRANSLATION ELONGATION FACTOR G-RELATED"/>
    <property type="match status" value="1"/>
</dbReference>
<dbReference type="Pfam" id="PF00679">
    <property type="entry name" value="EFG_C"/>
    <property type="match status" value="1"/>
</dbReference>
<dbReference type="Pfam" id="PF14492">
    <property type="entry name" value="EFG_III"/>
    <property type="match status" value="1"/>
</dbReference>
<dbReference type="Pfam" id="PF03764">
    <property type="entry name" value="EFG_IV"/>
    <property type="match status" value="1"/>
</dbReference>
<dbReference type="Pfam" id="PF00009">
    <property type="entry name" value="GTP_EFTU"/>
    <property type="match status" value="1"/>
</dbReference>
<dbReference type="Pfam" id="PF03144">
    <property type="entry name" value="GTP_EFTU_D2"/>
    <property type="match status" value="1"/>
</dbReference>
<dbReference type="PRINTS" id="PR00315">
    <property type="entry name" value="ELONGATNFCT"/>
</dbReference>
<dbReference type="SMART" id="SM00838">
    <property type="entry name" value="EFG_C"/>
    <property type="match status" value="1"/>
</dbReference>
<dbReference type="SMART" id="SM00889">
    <property type="entry name" value="EFG_IV"/>
    <property type="match status" value="1"/>
</dbReference>
<dbReference type="SUPFAM" id="SSF54980">
    <property type="entry name" value="EF-G C-terminal domain-like"/>
    <property type="match status" value="2"/>
</dbReference>
<dbReference type="SUPFAM" id="SSF52540">
    <property type="entry name" value="P-loop containing nucleoside triphosphate hydrolases"/>
    <property type="match status" value="1"/>
</dbReference>
<dbReference type="SUPFAM" id="SSF54211">
    <property type="entry name" value="Ribosomal protein S5 domain 2-like"/>
    <property type="match status" value="1"/>
</dbReference>
<dbReference type="SUPFAM" id="SSF50447">
    <property type="entry name" value="Translation proteins"/>
    <property type="match status" value="1"/>
</dbReference>
<dbReference type="PROSITE" id="PS00301">
    <property type="entry name" value="G_TR_1"/>
    <property type="match status" value="1"/>
</dbReference>
<dbReference type="PROSITE" id="PS51722">
    <property type="entry name" value="G_TR_2"/>
    <property type="match status" value="1"/>
</dbReference>
<gene>
    <name type="primary">fusA</name>
    <name type="synonym">fus</name>
    <name type="ordered locus">MPN_227</name>
    <name type="ORF">MP604</name>
</gene>
<protein>
    <recommendedName>
        <fullName>Elongation factor G</fullName>
        <shortName>EF-G</shortName>
    </recommendedName>
</protein>